<evidence type="ECO:0000255" key="1">
    <source>
        <dbReference type="HAMAP-Rule" id="MF_03123"/>
    </source>
</evidence>
<evidence type="ECO:0000255" key="2">
    <source>
        <dbReference type="PROSITE-ProRule" id="PRU01266"/>
    </source>
</evidence>
<evidence type="ECO:0000256" key="3">
    <source>
        <dbReference type="SAM" id="MobiDB-lite"/>
    </source>
</evidence>
<accession>C5PIN8</accession>
<sequence length="419" mass="45766">MAVCAGRLKCFGNPAVSLRTAASRAYATTTSPDPAIPSSSSASSSSALPKRPQTSFRDKLNAGPSFSDFLSGGNRDDARILDPNEAYALKTALVGPKGKKKEITRLPSWLKTSIPDSNNYKRIKNDLRGLGLHTVCEEARCPNISECWGGSSKSAATATIMLMGDTCTRACRFCSVKTSKTPPPLDPHEPENTAEALSRWGLGYVVLTTVDRDDLIDGGARHFAETVIRIKQKAPNILVECLTGDYAGDLEMVALMAKSGLDVYAHNVETVEALTPHVRDRRANFQTSLRVLKAAKAAVPSLITKTSMMLGLGETEEQMWDALRQLRAANVDVVTFGQYMRPTKRHMPVHEYVRPDVFELWKDRALEMGFLYCASGPLVRSSYKAGEAFIENVLKKRRAESTGPESTNVPNVTPDAIVR</sequence>
<organism>
    <name type="scientific">Coccidioides posadasii (strain C735)</name>
    <name type="common">Valley fever fungus</name>
    <dbReference type="NCBI Taxonomy" id="222929"/>
    <lineage>
        <taxon>Eukaryota</taxon>
        <taxon>Fungi</taxon>
        <taxon>Dikarya</taxon>
        <taxon>Ascomycota</taxon>
        <taxon>Pezizomycotina</taxon>
        <taxon>Eurotiomycetes</taxon>
        <taxon>Eurotiomycetidae</taxon>
        <taxon>Onygenales</taxon>
        <taxon>Onygenaceae</taxon>
        <taxon>Coccidioides</taxon>
    </lineage>
</organism>
<reference key="1">
    <citation type="journal article" date="2009" name="Genome Res.">
        <title>Comparative genomic analyses of the human fungal pathogens Coccidioides and their relatives.</title>
        <authorList>
            <person name="Sharpton T.J."/>
            <person name="Stajich J.E."/>
            <person name="Rounsley S.D."/>
            <person name="Gardner M.J."/>
            <person name="Wortman J.R."/>
            <person name="Jordar V.S."/>
            <person name="Maiti R."/>
            <person name="Kodira C.D."/>
            <person name="Neafsey D.E."/>
            <person name="Zeng Q."/>
            <person name="Hung C.-Y."/>
            <person name="McMahan C."/>
            <person name="Muszewska A."/>
            <person name="Grynberg M."/>
            <person name="Mandel M.A."/>
            <person name="Kellner E.M."/>
            <person name="Barker B.M."/>
            <person name="Galgiani J.N."/>
            <person name="Orbach M.J."/>
            <person name="Kirkland T.N."/>
            <person name="Cole G.T."/>
            <person name="Henn M.R."/>
            <person name="Birren B.W."/>
            <person name="Taylor J.W."/>
        </authorList>
    </citation>
    <scope>NUCLEOTIDE SEQUENCE [LARGE SCALE GENOMIC DNA]</scope>
    <source>
        <strain>C735</strain>
    </source>
</reference>
<dbReference type="EC" id="2.8.1.8" evidence="1"/>
<dbReference type="EMBL" id="ACFW01000049">
    <property type="protein sequence ID" value="EER24391.1"/>
    <property type="molecule type" value="Genomic_DNA"/>
</dbReference>
<dbReference type="RefSeq" id="XP_003066536.1">
    <property type="nucleotide sequence ID" value="XM_003066490.1"/>
</dbReference>
<dbReference type="SMR" id="C5PIN8"/>
<dbReference type="KEGG" id="cpw:9692006"/>
<dbReference type="VEuPathDB" id="FungiDB:CPC735_057610"/>
<dbReference type="HOGENOM" id="CLU_033144_0_0_1"/>
<dbReference type="OrthoDB" id="3231at2759"/>
<dbReference type="UniPathway" id="UPA00538">
    <property type="reaction ID" value="UER00593"/>
</dbReference>
<dbReference type="Proteomes" id="UP000009084">
    <property type="component" value="Unassembled WGS sequence"/>
</dbReference>
<dbReference type="GO" id="GO:0005739">
    <property type="term" value="C:mitochondrion"/>
    <property type="evidence" value="ECO:0007669"/>
    <property type="project" value="UniProtKB-SubCell"/>
</dbReference>
<dbReference type="GO" id="GO:0051539">
    <property type="term" value="F:4 iron, 4 sulfur cluster binding"/>
    <property type="evidence" value="ECO:0007669"/>
    <property type="project" value="UniProtKB-UniRule"/>
</dbReference>
<dbReference type="GO" id="GO:0016992">
    <property type="term" value="F:lipoate synthase activity"/>
    <property type="evidence" value="ECO:0007669"/>
    <property type="project" value="UniProtKB-UniRule"/>
</dbReference>
<dbReference type="GO" id="GO:0046872">
    <property type="term" value="F:metal ion binding"/>
    <property type="evidence" value="ECO:0007669"/>
    <property type="project" value="UniProtKB-KW"/>
</dbReference>
<dbReference type="CDD" id="cd01335">
    <property type="entry name" value="Radical_SAM"/>
    <property type="match status" value="1"/>
</dbReference>
<dbReference type="FunFam" id="3.20.20.70:FF:000036">
    <property type="entry name" value="Lipoyl synthase, mitochondrial"/>
    <property type="match status" value="1"/>
</dbReference>
<dbReference type="Gene3D" id="3.20.20.70">
    <property type="entry name" value="Aldolase class I"/>
    <property type="match status" value="1"/>
</dbReference>
<dbReference type="HAMAP" id="MF_00206">
    <property type="entry name" value="Lipoyl_synth"/>
    <property type="match status" value="1"/>
</dbReference>
<dbReference type="InterPro" id="IPR013785">
    <property type="entry name" value="Aldolase_TIM"/>
</dbReference>
<dbReference type="InterPro" id="IPR006638">
    <property type="entry name" value="Elp3/MiaA/NifB-like_rSAM"/>
</dbReference>
<dbReference type="InterPro" id="IPR031691">
    <property type="entry name" value="LIAS_N"/>
</dbReference>
<dbReference type="InterPro" id="IPR003698">
    <property type="entry name" value="Lipoyl_synth"/>
</dbReference>
<dbReference type="InterPro" id="IPR007197">
    <property type="entry name" value="rSAM"/>
</dbReference>
<dbReference type="NCBIfam" id="TIGR00510">
    <property type="entry name" value="lipA"/>
    <property type="match status" value="1"/>
</dbReference>
<dbReference type="NCBIfam" id="NF004019">
    <property type="entry name" value="PRK05481.1"/>
    <property type="match status" value="1"/>
</dbReference>
<dbReference type="NCBIfam" id="NF009544">
    <property type="entry name" value="PRK12928.1"/>
    <property type="match status" value="1"/>
</dbReference>
<dbReference type="PANTHER" id="PTHR10949">
    <property type="entry name" value="LIPOYL SYNTHASE"/>
    <property type="match status" value="1"/>
</dbReference>
<dbReference type="PANTHER" id="PTHR10949:SF0">
    <property type="entry name" value="LIPOYL SYNTHASE, MITOCHONDRIAL"/>
    <property type="match status" value="1"/>
</dbReference>
<dbReference type="Pfam" id="PF16881">
    <property type="entry name" value="LIAS_N"/>
    <property type="match status" value="1"/>
</dbReference>
<dbReference type="Pfam" id="PF04055">
    <property type="entry name" value="Radical_SAM"/>
    <property type="match status" value="1"/>
</dbReference>
<dbReference type="SFLD" id="SFLDF00271">
    <property type="entry name" value="lipoyl_synthase"/>
    <property type="match status" value="1"/>
</dbReference>
<dbReference type="SFLD" id="SFLDS00029">
    <property type="entry name" value="Radical_SAM"/>
    <property type="match status" value="1"/>
</dbReference>
<dbReference type="SMART" id="SM00729">
    <property type="entry name" value="Elp3"/>
    <property type="match status" value="1"/>
</dbReference>
<dbReference type="SUPFAM" id="SSF102114">
    <property type="entry name" value="Radical SAM enzymes"/>
    <property type="match status" value="1"/>
</dbReference>
<dbReference type="PROSITE" id="PS51918">
    <property type="entry name" value="RADICAL_SAM"/>
    <property type="match status" value="1"/>
</dbReference>
<proteinExistence type="inferred from homology"/>
<gene>
    <name type="ORF">CPC735_057610</name>
</gene>
<keyword id="KW-0004">4Fe-4S</keyword>
<keyword id="KW-0408">Iron</keyword>
<keyword id="KW-0411">Iron-sulfur</keyword>
<keyword id="KW-0479">Metal-binding</keyword>
<keyword id="KW-0496">Mitochondrion</keyword>
<keyword id="KW-0949">S-adenosyl-L-methionine</keyword>
<keyword id="KW-0808">Transferase</keyword>
<keyword id="KW-0809">Transit peptide</keyword>
<name>LIPA_COCP7</name>
<feature type="transit peptide" description="Mitochondrion" evidence="1">
    <location>
        <begin position="1"/>
        <end position="26"/>
    </location>
</feature>
<feature type="chain" id="PRO_0000398263" description="Lipoyl synthase, mitochondrial">
    <location>
        <begin position="27"/>
        <end position="419"/>
    </location>
</feature>
<feature type="domain" description="Radical SAM core" evidence="2">
    <location>
        <begin position="150"/>
        <end position="371"/>
    </location>
</feature>
<feature type="region of interest" description="Disordered" evidence="3">
    <location>
        <begin position="28"/>
        <end position="61"/>
    </location>
</feature>
<feature type="region of interest" description="Disordered" evidence="3">
    <location>
        <begin position="399"/>
        <end position="419"/>
    </location>
</feature>
<feature type="compositionally biased region" description="Low complexity" evidence="3">
    <location>
        <begin position="28"/>
        <end position="47"/>
    </location>
</feature>
<feature type="binding site" evidence="1">
    <location>
        <position position="136"/>
    </location>
    <ligand>
        <name>[4Fe-4S] cluster</name>
        <dbReference type="ChEBI" id="CHEBI:49883"/>
        <label>1</label>
    </ligand>
</feature>
<feature type="binding site" evidence="1">
    <location>
        <position position="141"/>
    </location>
    <ligand>
        <name>[4Fe-4S] cluster</name>
        <dbReference type="ChEBI" id="CHEBI:49883"/>
        <label>1</label>
    </ligand>
</feature>
<feature type="binding site" evidence="1">
    <location>
        <position position="147"/>
    </location>
    <ligand>
        <name>[4Fe-4S] cluster</name>
        <dbReference type="ChEBI" id="CHEBI:49883"/>
        <label>1</label>
    </ligand>
</feature>
<feature type="binding site" evidence="1">
    <location>
        <position position="167"/>
    </location>
    <ligand>
        <name>[4Fe-4S] cluster</name>
        <dbReference type="ChEBI" id="CHEBI:49883"/>
        <label>2</label>
        <note>4Fe-4S-S-AdoMet</note>
    </ligand>
</feature>
<feature type="binding site" evidence="1">
    <location>
        <position position="171"/>
    </location>
    <ligand>
        <name>[4Fe-4S] cluster</name>
        <dbReference type="ChEBI" id="CHEBI:49883"/>
        <label>2</label>
        <note>4Fe-4S-S-AdoMet</note>
    </ligand>
</feature>
<feature type="binding site" evidence="1">
    <location>
        <position position="174"/>
    </location>
    <ligand>
        <name>[4Fe-4S] cluster</name>
        <dbReference type="ChEBI" id="CHEBI:49883"/>
        <label>2</label>
        <note>4Fe-4S-S-AdoMet</note>
    </ligand>
</feature>
<feature type="binding site" evidence="1">
    <location>
        <position position="382"/>
    </location>
    <ligand>
        <name>[4Fe-4S] cluster</name>
        <dbReference type="ChEBI" id="CHEBI:49883"/>
        <label>1</label>
    </ligand>
</feature>
<protein>
    <recommendedName>
        <fullName evidence="1">Lipoyl synthase, mitochondrial</fullName>
        <ecNumber evidence="1">2.8.1.8</ecNumber>
    </recommendedName>
    <alternativeName>
        <fullName evidence="1">Lipoate synthase</fullName>
        <shortName evidence="1">LS</shortName>
        <shortName evidence="1">Lip-syn</shortName>
    </alternativeName>
    <alternativeName>
        <fullName evidence="1">Lipoic acid synthase</fullName>
    </alternativeName>
</protein>
<comment type="function">
    <text evidence="1">Catalyzes the radical-mediated insertion of two sulfur atoms into the C-6 and C-8 positions of the octanoyl moiety bound to the lipoyl domains of lipoate-dependent enzymes, thereby converting the octanoylated domains into lipoylated derivatives.</text>
</comment>
<comment type="catalytic activity">
    <reaction evidence="1">
        <text>[[Fe-S] cluster scaffold protein carrying a second [4Fe-4S](2+) cluster] + N(6)-octanoyl-L-lysyl-[protein] + 2 oxidized [2Fe-2S]-[ferredoxin] + 2 S-adenosyl-L-methionine + 4 H(+) = [[Fe-S] cluster scaffold protein] + N(6)-[(R)-dihydrolipoyl]-L-lysyl-[protein] + 4 Fe(3+) + 2 hydrogen sulfide + 2 5'-deoxyadenosine + 2 L-methionine + 2 reduced [2Fe-2S]-[ferredoxin]</text>
        <dbReference type="Rhea" id="RHEA:16585"/>
        <dbReference type="Rhea" id="RHEA-COMP:9928"/>
        <dbReference type="Rhea" id="RHEA-COMP:10000"/>
        <dbReference type="Rhea" id="RHEA-COMP:10001"/>
        <dbReference type="Rhea" id="RHEA-COMP:10475"/>
        <dbReference type="Rhea" id="RHEA-COMP:14568"/>
        <dbReference type="Rhea" id="RHEA-COMP:14569"/>
        <dbReference type="ChEBI" id="CHEBI:15378"/>
        <dbReference type="ChEBI" id="CHEBI:17319"/>
        <dbReference type="ChEBI" id="CHEBI:29034"/>
        <dbReference type="ChEBI" id="CHEBI:29919"/>
        <dbReference type="ChEBI" id="CHEBI:33722"/>
        <dbReference type="ChEBI" id="CHEBI:33737"/>
        <dbReference type="ChEBI" id="CHEBI:33738"/>
        <dbReference type="ChEBI" id="CHEBI:57844"/>
        <dbReference type="ChEBI" id="CHEBI:59789"/>
        <dbReference type="ChEBI" id="CHEBI:78809"/>
        <dbReference type="ChEBI" id="CHEBI:83100"/>
        <dbReference type="EC" id="2.8.1.8"/>
    </reaction>
</comment>
<comment type="cofactor">
    <cofactor evidence="1">
        <name>[4Fe-4S] cluster</name>
        <dbReference type="ChEBI" id="CHEBI:49883"/>
    </cofactor>
    <text evidence="1">Binds 2 [4Fe-4S] clusters per subunit. One cluster is coordinated with 3 cysteines and an exchangeable S-adenosyl-L-methionine.</text>
</comment>
<comment type="pathway">
    <text evidence="1">Protein modification; protein lipoylation via endogenous pathway; protein N(6)-(lipoyl)lysine from octanoyl-[acyl-carrier-protein]: step 2/2.</text>
</comment>
<comment type="subcellular location">
    <subcellularLocation>
        <location evidence="1">Mitochondrion</location>
    </subcellularLocation>
</comment>
<comment type="similarity">
    <text evidence="1">Belongs to the radical SAM superfamily. Lipoyl synthase family.</text>
</comment>